<proteinExistence type="evidence at transcript level"/>
<gene>
    <name type="primary">CCDC54</name>
</gene>
<reference key="1">
    <citation type="submission" date="2006-02" db="EMBL/GenBank/DDBJ databases">
        <authorList>
            <consortium name="NIH - Mammalian Gene Collection (MGC) project"/>
        </authorList>
    </citation>
    <scope>NUCLEOTIDE SEQUENCE [LARGE SCALE MRNA]</scope>
    <source>
        <strain>Hereford</strain>
        <tissue>Testis</tissue>
    </source>
</reference>
<accession>Q29RU3</accession>
<organism>
    <name type="scientific">Bos taurus</name>
    <name type="common">Bovine</name>
    <dbReference type="NCBI Taxonomy" id="9913"/>
    <lineage>
        <taxon>Eukaryota</taxon>
        <taxon>Metazoa</taxon>
        <taxon>Chordata</taxon>
        <taxon>Craniata</taxon>
        <taxon>Vertebrata</taxon>
        <taxon>Euteleostomi</taxon>
        <taxon>Mammalia</taxon>
        <taxon>Eutheria</taxon>
        <taxon>Laurasiatheria</taxon>
        <taxon>Artiodactyla</taxon>
        <taxon>Ruminantia</taxon>
        <taxon>Pecora</taxon>
        <taxon>Bovidae</taxon>
        <taxon>Bovinae</taxon>
        <taxon>Bos</taxon>
    </lineage>
</organism>
<sequence>MYKLQAKRVKAAAGQMWNSNFSKIRQSLKNAYHKCKNQYPNSTRCPTMTSHDCDQEDLNADEEMNLLVMLQDIKTTQLELLSQMTGMICALSKIQEKTDFFQKQMQVLETKMNVNENKQCATAEDIFSVKEDVDALKKKVTELGNQNSCSNVHCLEVLDGEKGKEILELLHKVTQSETLKNTLTSIDSEISSAEPEKVLSYPKSTDHLEEKTISPQIKALEKSNYQNALRSFQKAKSNIYIYPDFNTWIKLTFVHGGKWRFFLSATKLEEFIQWLLSRPTLPPEEPQVITQKYCLFTGPITNLTTICVSVFNYIYCLFGSSKEEVTRL</sequence>
<keyword id="KW-0175">Coiled coil</keyword>
<keyword id="KW-0597">Phosphoprotein</keyword>
<keyword id="KW-1185">Reference proteome</keyword>
<evidence type="ECO:0000250" key="1">
    <source>
        <dbReference type="UniProtKB" id="Q8NEL0"/>
    </source>
</evidence>
<evidence type="ECO:0000255" key="2"/>
<dbReference type="EMBL" id="BC114016">
    <property type="protein sequence ID" value="AAI14017.1"/>
    <property type="molecule type" value="mRNA"/>
</dbReference>
<dbReference type="RefSeq" id="NP_001098960.1">
    <property type="nucleotide sequence ID" value="NM_001105490.1"/>
</dbReference>
<dbReference type="RefSeq" id="XP_024845470.1">
    <property type="nucleotide sequence ID" value="XM_024989702.2"/>
</dbReference>
<dbReference type="SMR" id="Q29RU3"/>
<dbReference type="FunCoup" id="Q29RU3">
    <property type="interactions" value="1"/>
</dbReference>
<dbReference type="STRING" id="9913.ENSBTAP00000055319"/>
<dbReference type="PaxDb" id="9913-ENSBTAP00000055319"/>
<dbReference type="Ensembl" id="ENSBTAT00000063186.2">
    <property type="protein sequence ID" value="ENSBTAP00000055319.1"/>
    <property type="gene ID" value="ENSBTAG00000046313.2"/>
</dbReference>
<dbReference type="GeneID" id="100125920"/>
<dbReference type="KEGG" id="bta:100125920"/>
<dbReference type="CTD" id="84692"/>
<dbReference type="VEuPathDB" id="HostDB:ENSBTAG00000046313"/>
<dbReference type="VGNC" id="VGNC:26900">
    <property type="gene designation" value="CCDC54"/>
</dbReference>
<dbReference type="eggNOG" id="ENOG502SSGK">
    <property type="taxonomic scope" value="Eukaryota"/>
</dbReference>
<dbReference type="GeneTree" id="ENSGT00390000008948"/>
<dbReference type="HOGENOM" id="CLU_074373_0_0_1"/>
<dbReference type="InParanoid" id="Q29RU3"/>
<dbReference type="OMA" id="QMWTSNL"/>
<dbReference type="OrthoDB" id="9446450at2759"/>
<dbReference type="TreeFam" id="TF338361"/>
<dbReference type="Proteomes" id="UP000009136">
    <property type="component" value="Chromosome 1"/>
</dbReference>
<dbReference type="Bgee" id="ENSBTAG00000046313">
    <property type="expression patterns" value="Expressed in semen and 11 other cell types or tissues"/>
</dbReference>
<dbReference type="InterPro" id="IPR037758">
    <property type="entry name" value="Ccdc54"/>
</dbReference>
<dbReference type="PANTHER" id="PTHR37880">
    <property type="entry name" value="COILED-COIL DOMAIN-CONTAINING PROTEIN 54"/>
    <property type="match status" value="1"/>
</dbReference>
<dbReference type="PANTHER" id="PTHR37880:SF1">
    <property type="entry name" value="COILED-COIL DOMAIN-CONTAINING PROTEIN 54"/>
    <property type="match status" value="1"/>
</dbReference>
<name>CCD54_BOVIN</name>
<feature type="chain" id="PRO_0000286667" description="Coiled-coil domain-containing protein 54">
    <location>
        <begin position="1"/>
        <end position="328"/>
    </location>
</feature>
<feature type="coiled-coil region" evidence="2">
    <location>
        <begin position="93"/>
        <end position="148"/>
    </location>
</feature>
<feature type="modified residue" description="Phosphothreonine" evidence="1">
    <location>
        <position position="182"/>
    </location>
</feature>
<protein>
    <recommendedName>
        <fullName>Coiled-coil domain-containing protein 54</fullName>
    </recommendedName>
</protein>